<proteinExistence type="inferred from homology"/>
<protein>
    <recommendedName>
        <fullName evidence="1">UPF0358 protein BCAH187_A4068</fullName>
    </recommendedName>
</protein>
<dbReference type="EMBL" id="CP001177">
    <property type="protein sequence ID" value="ACJ78279.1"/>
    <property type="molecule type" value="Genomic_DNA"/>
</dbReference>
<dbReference type="SMR" id="B7HMD4"/>
<dbReference type="KEGG" id="bcr:BCAH187_A4068"/>
<dbReference type="HOGENOM" id="CLU_160493_1_0_9"/>
<dbReference type="Proteomes" id="UP000002214">
    <property type="component" value="Chromosome"/>
</dbReference>
<dbReference type="Gene3D" id="1.10.287.750">
    <property type="entry name" value="SO2669-like"/>
    <property type="match status" value="1"/>
</dbReference>
<dbReference type="HAMAP" id="MF_01560">
    <property type="entry name" value="UPF0358"/>
    <property type="match status" value="1"/>
</dbReference>
<dbReference type="InterPro" id="IPR009983">
    <property type="entry name" value="UPF0358"/>
</dbReference>
<dbReference type="InterPro" id="IPR036270">
    <property type="entry name" value="UPF0358_sf"/>
</dbReference>
<dbReference type="NCBIfam" id="NF010187">
    <property type="entry name" value="PRK13666.1"/>
    <property type="match status" value="1"/>
</dbReference>
<dbReference type="Pfam" id="PF07408">
    <property type="entry name" value="DUF1507"/>
    <property type="match status" value="1"/>
</dbReference>
<dbReference type="SUPFAM" id="SSF140404">
    <property type="entry name" value="EF2458-like"/>
    <property type="match status" value="1"/>
</dbReference>
<accession>B7HMD4</accession>
<gene>
    <name type="ordered locus">BCAH187_A4068</name>
</gene>
<comment type="similarity">
    <text evidence="1">Belongs to the UPF0358 family.</text>
</comment>
<feature type="chain" id="PRO_1000199626" description="UPF0358 protein BCAH187_A4068">
    <location>
        <begin position="1"/>
        <end position="95"/>
    </location>
</feature>
<sequence length="95" mass="10740">MASETVSNHQEKALALLQADAEKILRLIKVQMDHLTMPQCPLYEEVLDTQMFGLSREVDFAVRLGLIAEEQGKAMLGELERELSALHEAFTNKQQ</sequence>
<name>Y4068_BACC7</name>
<reference key="1">
    <citation type="submission" date="2008-10" db="EMBL/GenBank/DDBJ databases">
        <title>Genome sequence of Bacillus cereus AH187.</title>
        <authorList>
            <person name="Dodson R.J."/>
            <person name="Durkin A.S."/>
            <person name="Rosovitz M.J."/>
            <person name="Rasko D.A."/>
            <person name="Kolsto A.B."/>
            <person name="Okstad O.A."/>
            <person name="Ravel J."/>
            <person name="Sutton G."/>
        </authorList>
    </citation>
    <scope>NUCLEOTIDE SEQUENCE [LARGE SCALE GENOMIC DNA]</scope>
    <source>
        <strain>AH187</strain>
    </source>
</reference>
<organism>
    <name type="scientific">Bacillus cereus (strain AH187)</name>
    <dbReference type="NCBI Taxonomy" id="405534"/>
    <lineage>
        <taxon>Bacteria</taxon>
        <taxon>Bacillati</taxon>
        <taxon>Bacillota</taxon>
        <taxon>Bacilli</taxon>
        <taxon>Bacillales</taxon>
        <taxon>Bacillaceae</taxon>
        <taxon>Bacillus</taxon>
        <taxon>Bacillus cereus group</taxon>
    </lineage>
</organism>
<evidence type="ECO:0000255" key="1">
    <source>
        <dbReference type="HAMAP-Rule" id="MF_01560"/>
    </source>
</evidence>